<proteinExistence type="inferred from homology"/>
<dbReference type="EMBL" id="BX293980">
    <property type="protein sequence ID" value="CAE77646.1"/>
    <property type="molecule type" value="Genomic_DNA"/>
</dbReference>
<dbReference type="EMBL" id="BX293980">
    <property type="protein sequence ID" value="CAE77623.1"/>
    <property type="molecule type" value="Genomic_DNA"/>
</dbReference>
<dbReference type="RefSeq" id="NP_975981.1">
    <property type="nucleotide sequence ID" value="NC_005364.2"/>
</dbReference>
<dbReference type="RefSeq" id="NP_976004.1">
    <property type="nucleotide sequence ID" value="NC_005364.2"/>
</dbReference>
<dbReference type="RefSeq" id="WP_011167160.1">
    <property type="nucleotide sequence ID" value="NC_005364.2"/>
</dbReference>
<dbReference type="SMR" id="Q6MRU5"/>
<dbReference type="STRING" id="272632.MSC_1017"/>
<dbReference type="KEGG" id="mmy:MSC_1017"/>
<dbReference type="KEGG" id="mmy:MSC_1042"/>
<dbReference type="PATRIC" id="fig|272632.4.peg.1104"/>
<dbReference type="eggNOG" id="COG0445">
    <property type="taxonomic scope" value="Bacteria"/>
</dbReference>
<dbReference type="HOGENOM" id="CLU_007831_2_2_14"/>
<dbReference type="Proteomes" id="UP000001016">
    <property type="component" value="Chromosome"/>
</dbReference>
<dbReference type="GO" id="GO:0005829">
    <property type="term" value="C:cytosol"/>
    <property type="evidence" value="ECO:0007669"/>
    <property type="project" value="TreeGrafter"/>
</dbReference>
<dbReference type="GO" id="GO:0050660">
    <property type="term" value="F:flavin adenine dinucleotide binding"/>
    <property type="evidence" value="ECO:0007669"/>
    <property type="project" value="UniProtKB-UniRule"/>
</dbReference>
<dbReference type="GO" id="GO:0030488">
    <property type="term" value="P:tRNA methylation"/>
    <property type="evidence" value="ECO:0007669"/>
    <property type="project" value="TreeGrafter"/>
</dbReference>
<dbReference type="GO" id="GO:0002098">
    <property type="term" value="P:tRNA wobble uridine modification"/>
    <property type="evidence" value="ECO:0007669"/>
    <property type="project" value="InterPro"/>
</dbReference>
<dbReference type="FunFam" id="1.10.150.570:FF:000001">
    <property type="entry name" value="tRNA uridine 5-carboxymethylaminomethyl modification enzyme MnmG"/>
    <property type="match status" value="1"/>
</dbReference>
<dbReference type="FunFam" id="3.50.50.60:FF:000002">
    <property type="entry name" value="tRNA uridine 5-carboxymethylaminomethyl modification enzyme MnmG"/>
    <property type="match status" value="1"/>
</dbReference>
<dbReference type="Gene3D" id="3.50.50.60">
    <property type="entry name" value="FAD/NAD(P)-binding domain"/>
    <property type="match status" value="2"/>
</dbReference>
<dbReference type="Gene3D" id="1.10.150.570">
    <property type="entry name" value="GidA associated domain, C-terminal subdomain"/>
    <property type="match status" value="1"/>
</dbReference>
<dbReference type="Gene3D" id="1.10.10.1800">
    <property type="entry name" value="tRNA uridine 5-carboxymethylaminomethyl modification enzyme MnmG/GidA"/>
    <property type="match status" value="1"/>
</dbReference>
<dbReference type="HAMAP" id="MF_00129">
    <property type="entry name" value="MnmG_GidA"/>
    <property type="match status" value="1"/>
</dbReference>
<dbReference type="InterPro" id="IPR036188">
    <property type="entry name" value="FAD/NAD-bd_sf"/>
</dbReference>
<dbReference type="InterPro" id="IPR049312">
    <property type="entry name" value="GIDA_C_N"/>
</dbReference>
<dbReference type="InterPro" id="IPR004416">
    <property type="entry name" value="MnmG"/>
</dbReference>
<dbReference type="InterPro" id="IPR002218">
    <property type="entry name" value="MnmG-rel"/>
</dbReference>
<dbReference type="InterPro" id="IPR020595">
    <property type="entry name" value="MnmG-rel_CS"/>
</dbReference>
<dbReference type="InterPro" id="IPR026904">
    <property type="entry name" value="MnmG_C"/>
</dbReference>
<dbReference type="InterPro" id="IPR047001">
    <property type="entry name" value="MnmG_C_subdom"/>
</dbReference>
<dbReference type="InterPro" id="IPR044920">
    <property type="entry name" value="MnmG_C_subdom_sf"/>
</dbReference>
<dbReference type="InterPro" id="IPR040131">
    <property type="entry name" value="MnmG_N"/>
</dbReference>
<dbReference type="NCBIfam" id="TIGR00136">
    <property type="entry name" value="mnmG_gidA"/>
    <property type="match status" value="1"/>
</dbReference>
<dbReference type="PANTHER" id="PTHR11806">
    <property type="entry name" value="GLUCOSE INHIBITED DIVISION PROTEIN A"/>
    <property type="match status" value="1"/>
</dbReference>
<dbReference type="PANTHER" id="PTHR11806:SF0">
    <property type="entry name" value="PROTEIN MTO1 HOMOLOG, MITOCHONDRIAL"/>
    <property type="match status" value="1"/>
</dbReference>
<dbReference type="Pfam" id="PF01134">
    <property type="entry name" value="GIDA"/>
    <property type="match status" value="1"/>
</dbReference>
<dbReference type="Pfam" id="PF21680">
    <property type="entry name" value="GIDA_C_1st"/>
    <property type="match status" value="1"/>
</dbReference>
<dbReference type="Pfam" id="PF13932">
    <property type="entry name" value="SAM_GIDA_C"/>
    <property type="match status" value="1"/>
</dbReference>
<dbReference type="PRINTS" id="PR00368">
    <property type="entry name" value="FADPNR"/>
</dbReference>
<dbReference type="PRINTS" id="PR00411">
    <property type="entry name" value="PNDRDTASEI"/>
</dbReference>
<dbReference type="SMART" id="SM01228">
    <property type="entry name" value="GIDA_assoc_3"/>
    <property type="match status" value="1"/>
</dbReference>
<dbReference type="SUPFAM" id="SSF51905">
    <property type="entry name" value="FAD/NAD(P)-binding domain"/>
    <property type="match status" value="1"/>
</dbReference>
<dbReference type="PROSITE" id="PS01280">
    <property type="entry name" value="GIDA_1"/>
    <property type="match status" value="1"/>
</dbReference>
<dbReference type="PROSITE" id="PS01281">
    <property type="entry name" value="GIDA_2"/>
    <property type="match status" value="1"/>
</dbReference>
<evidence type="ECO:0000255" key="1">
    <source>
        <dbReference type="HAMAP-Rule" id="MF_00129"/>
    </source>
</evidence>
<sequence>MKSNYDVIVVGGGHAGVEAALASARLNKKTALINLYEDKIATMPCNPSVGGPAKGIVVREIDALGGEMAKAADATALQTKLLNSSRGPGVWALRVQSDKEEYSKYMRNVIKNQKNLDLITRACTGLVYDENKTVTGIYLDDQTILNAKAVIITTGTYLKSEILKGVDRYESGPNNEKTTKGISQSLIDLGIKLMRFKTGTPARVYRDSVDLSNAVLEPGTDMKLAFSFSTSTYTPIEKQQPCYLIHSTLETKKIIEDNLEKSAMYSGTVKSIGPRYCPSFEDKAVRFREKDTHQIFIEPETLNGDTWYVQGFSTSMPIEVQEMMLKSLPGFENVRVKHWAYAIEYDCIDPMQLSPSLELKDVKNLFTAGQINGTSGYEEAAGQGLIAGINASRKIDGLDPIILRRDEAYIGVMIDDLINKGVWEPYRLLTSRAEHRLLLRNDNAETRLKQYGKEIGLISDQEWNQYLIYVKEIEQAIKELKEIRFTPKSQLAINLKNKNQADLSHGYSGYEIIKIPTVDINELIEFIPSLQKLKTNQLQSIVIEIRFEGYVKKERQLVDKLVKLERKKIPLDINYSKVDNLATEAKDKLEKIRPLNIGQASRITGVNPADIQMLLFYLKKQYPLENIDN</sequence>
<comment type="function">
    <text evidence="1">NAD-binding protein involved in the addition of a carboxymethylaminomethyl (cmnm) group at the wobble position (U34) of certain tRNAs, forming tRNA-cmnm(5)s(2)U34.</text>
</comment>
<comment type="cofactor">
    <cofactor evidence="1">
        <name>FAD</name>
        <dbReference type="ChEBI" id="CHEBI:57692"/>
    </cofactor>
</comment>
<comment type="subunit">
    <text evidence="1">Homodimer. Heterotetramer of two MnmE and two MnmG subunits.</text>
</comment>
<comment type="subcellular location">
    <subcellularLocation>
        <location evidence="1">Cytoplasm</location>
    </subcellularLocation>
</comment>
<comment type="similarity">
    <text evidence="1">Belongs to the MnmG family.</text>
</comment>
<feature type="chain" id="PRO_0000117135" description="tRNA uridine 5-carboxymethylaminomethyl modification enzyme MnmG">
    <location>
        <begin position="1"/>
        <end position="629"/>
    </location>
</feature>
<feature type="binding site" evidence="1">
    <location>
        <begin position="11"/>
        <end position="16"/>
    </location>
    <ligand>
        <name>FAD</name>
        <dbReference type="ChEBI" id="CHEBI:57692"/>
    </ligand>
</feature>
<feature type="binding site" evidence="1">
    <location>
        <begin position="273"/>
        <end position="287"/>
    </location>
    <ligand>
        <name>NAD(+)</name>
        <dbReference type="ChEBI" id="CHEBI:57540"/>
    </ligand>
</feature>
<organism>
    <name type="scientific">Mycoplasma mycoides subsp. mycoides SC (strain CCUG 32753 / NCTC 10114 / PG1)</name>
    <dbReference type="NCBI Taxonomy" id="272632"/>
    <lineage>
        <taxon>Bacteria</taxon>
        <taxon>Bacillati</taxon>
        <taxon>Mycoplasmatota</taxon>
        <taxon>Mollicutes</taxon>
        <taxon>Mycoplasmataceae</taxon>
        <taxon>Mycoplasma</taxon>
    </lineage>
</organism>
<accession>Q6MRU5</accession>
<reference key="1">
    <citation type="journal article" date="2004" name="Genome Res.">
        <title>The genome sequence of Mycoplasma mycoides subsp. mycoides SC type strain PG1T, the causative agent of contagious bovine pleuropneumonia (CBPP).</title>
        <authorList>
            <person name="Westberg J."/>
            <person name="Persson A."/>
            <person name="Holmberg A."/>
            <person name="Goesmann A."/>
            <person name="Lundeberg J."/>
            <person name="Johansson K.-E."/>
            <person name="Pettersson B."/>
            <person name="Uhlen M."/>
        </authorList>
    </citation>
    <scope>NUCLEOTIDE SEQUENCE [LARGE SCALE GENOMIC DNA]</scope>
    <source>
        <strain>CCUG 32753 / NCTC 10114 / PG1</strain>
    </source>
</reference>
<protein>
    <recommendedName>
        <fullName evidence="1">tRNA uridine 5-carboxymethylaminomethyl modification enzyme MnmG</fullName>
    </recommendedName>
    <alternativeName>
        <fullName evidence="1">Glucose-inhibited division protein A</fullName>
    </alternativeName>
</protein>
<name>MNMG_MYCMS</name>
<gene>
    <name evidence="1" type="primary">mnmG1</name>
    <name evidence="1" type="synonym">gidA1</name>
    <name type="ordered locus">MSC_1017</name>
</gene>
<gene>
    <name evidence="1" type="primary">mnmG2</name>
    <name evidence="1" type="synonym">gidA2</name>
    <name type="ordered locus">MSC_1042</name>
</gene>
<keyword id="KW-0963">Cytoplasm</keyword>
<keyword id="KW-0274">FAD</keyword>
<keyword id="KW-0285">Flavoprotein</keyword>
<keyword id="KW-0520">NAD</keyword>
<keyword id="KW-1185">Reference proteome</keyword>
<keyword id="KW-0819">tRNA processing</keyword>